<keyword id="KW-0150">Chloroplast</keyword>
<keyword id="KW-0934">Plastid</keyword>
<keyword id="KW-0687">Ribonucleoprotein</keyword>
<keyword id="KW-0689">Ribosomal protein</keyword>
<keyword id="KW-0694">RNA-binding</keyword>
<keyword id="KW-0699">rRNA-binding</keyword>
<geneLocation type="chloroplast"/>
<dbReference type="EMBL" id="AP009370">
    <property type="protein sequence ID" value="BAF50108.1"/>
    <property type="molecule type" value="Genomic_DNA"/>
</dbReference>
<dbReference type="RefSeq" id="YP_001123284.1">
    <property type="nucleotide sequence ID" value="NC_009269.1"/>
</dbReference>
<dbReference type="SMR" id="A4QKA3"/>
<dbReference type="GeneID" id="4961887"/>
<dbReference type="GO" id="GO:0009507">
    <property type="term" value="C:chloroplast"/>
    <property type="evidence" value="ECO:0007669"/>
    <property type="project" value="UniProtKB-SubCell"/>
</dbReference>
<dbReference type="GO" id="GO:0015935">
    <property type="term" value="C:small ribosomal subunit"/>
    <property type="evidence" value="ECO:0007669"/>
    <property type="project" value="TreeGrafter"/>
</dbReference>
<dbReference type="GO" id="GO:0019843">
    <property type="term" value="F:rRNA binding"/>
    <property type="evidence" value="ECO:0007669"/>
    <property type="project" value="UniProtKB-UniRule"/>
</dbReference>
<dbReference type="GO" id="GO:0003735">
    <property type="term" value="F:structural constituent of ribosome"/>
    <property type="evidence" value="ECO:0007669"/>
    <property type="project" value="InterPro"/>
</dbReference>
<dbReference type="GO" id="GO:0006412">
    <property type="term" value="P:translation"/>
    <property type="evidence" value="ECO:0007669"/>
    <property type="project" value="UniProtKB-UniRule"/>
</dbReference>
<dbReference type="FunFam" id="1.10.287.1480:FF:000001">
    <property type="entry name" value="30S ribosomal protein S14"/>
    <property type="match status" value="1"/>
</dbReference>
<dbReference type="Gene3D" id="1.10.287.1480">
    <property type="match status" value="1"/>
</dbReference>
<dbReference type="HAMAP" id="MF_00537">
    <property type="entry name" value="Ribosomal_uS14_1"/>
    <property type="match status" value="1"/>
</dbReference>
<dbReference type="InterPro" id="IPR001209">
    <property type="entry name" value="Ribosomal_uS14"/>
</dbReference>
<dbReference type="InterPro" id="IPR023036">
    <property type="entry name" value="Ribosomal_uS14_bac/plastid"/>
</dbReference>
<dbReference type="InterPro" id="IPR018271">
    <property type="entry name" value="Ribosomal_uS14_CS"/>
</dbReference>
<dbReference type="NCBIfam" id="NF006477">
    <property type="entry name" value="PRK08881.1"/>
    <property type="match status" value="1"/>
</dbReference>
<dbReference type="PANTHER" id="PTHR19836">
    <property type="entry name" value="30S RIBOSOMAL PROTEIN S14"/>
    <property type="match status" value="1"/>
</dbReference>
<dbReference type="PANTHER" id="PTHR19836:SF19">
    <property type="entry name" value="SMALL RIBOSOMAL SUBUNIT PROTEIN US14M"/>
    <property type="match status" value="1"/>
</dbReference>
<dbReference type="Pfam" id="PF00253">
    <property type="entry name" value="Ribosomal_S14"/>
    <property type="match status" value="1"/>
</dbReference>
<dbReference type="SUPFAM" id="SSF57716">
    <property type="entry name" value="Glucocorticoid receptor-like (DNA-binding domain)"/>
    <property type="match status" value="1"/>
</dbReference>
<dbReference type="PROSITE" id="PS00527">
    <property type="entry name" value="RIBOSOMAL_S14"/>
    <property type="match status" value="1"/>
</dbReference>
<accession>A4QKA3</accession>
<evidence type="ECO:0000255" key="1">
    <source>
        <dbReference type="HAMAP-Rule" id="MF_00537"/>
    </source>
</evidence>
<evidence type="ECO:0000305" key="2"/>
<feature type="chain" id="PRO_0000354400" description="Small ribosomal subunit protein uS14c">
    <location>
        <begin position="1"/>
        <end position="100"/>
    </location>
</feature>
<gene>
    <name evidence="1" type="primary">rps14</name>
</gene>
<organism>
    <name type="scientific">Barbarea verna</name>
    <name type="common">Land cress</name>
    <name type="synonym">Erysimum vernum</name>
    <dbReference type="NCBI Taxonomy" id="50458"/>
    <lineage>
        <taxon>Eukaryota</taxon>
        <taxon>Viridiplantae</taxon>
        <taxon>Streptophyta</taxon>
        <taxon>Embryophyta</taxon>
        <taxon>Tracheophyta</taxon>
        <taxon>Spermatophyta</taxon>
        <taxon>Magnoliopsida</taxon>
        <taxon>eudicotyledons</taxon>
        <taxon>Gunneridae</taxon>
        <taxon>Pentapetalae</taxon>
        <taxon>rosids</taxon>
        <taxon>malvids</taxon>
        <taxon>Brassicales</taxon>
        <taxon>Brassicaceae</taxon>
        <taxon>Cardamineae</taxon>
        <taxon>Barbarea</taxon>
    </lineage>
</organism>
<comment type="function">
    <text evidence="1">Binds 16S rRNA, required for the assembly of 30S particles.</text>
</comment>
<comment type="subunit">
    <text evidence="1">Part of the 30S ribosomal subunit.</text>
</comment>
<comment type="subcellular location">
    <subcellularLocation>
        <location>Plastid</location>
        <location>Chloroplast</location>
    </subcellularLocation>
</comment>
<comment type="similarity">
    <text evidence="1">Belongs to the universal ribosomal protein uS14 family.</text>
</comment>
<sequence>MAKKSLIYREKKRQKLEKKYHLIRRSLKKEISQIPSLSEKWKIHGKLQSPPRNSAPTRLHRRCFSTGRPRANYRDFGLSGHILREMVQACLLPGATRASW</sequence>
<reference key="1">
    <citation type="submission" date="2007-03" db="EMBL/GenBank/DDBJ databases">
        <title>Sequencing analysis of Barbarea verna chloroplast DNA.</title>
        <authorList>
            <person name="Hosouchi T."/>
            <person name="Tsuruoka H."/>
            <person name="Kotani H."/>
        </authorList>
    </citation>
    <scope>NUCLEOTIDE SEQUENCE [LARGE SCALE GENOMIC DNA]</scope>
</reference>
<protein>
    <recommendedName>
        <fullName evidence="1">Small ribosomal subunit protein uS14c</fullName>
    </recommendedName>
    <alternativeName>
        <fullName evidence="2">30S ribosomal protein S14, chloroplastic</fullName>
    </alternativeName>
</protein>
<name>RR14_BARVE</name>
<proteinExistence type="inferred from homology"/>